<protein>
    <recommendedName>
        <fullName evidence="1">Chaperone protein DnaK</fullName>
    </recommendedName>
    <alternativeName>
        <fullName evidence="1">HSP70</fullName>
    </alternativeName>
    <alternativeName>
        <fullName evidence="1">Heat shock 70 kDa protein</fullName>
    </alternativeName>
    <alternativeName>
        <fullName evidence="1">Heat shock protein 70</fullName>
    </alternativeName>
</protein>
<reference key="1">
    <citation type="submission" date="2008-04" db="EMBL/GenBank/DDBJ databases">
        <title>Complete sequence of chromosome of Exiguobacterium sibiricum 255-15.</title>
        <authorList>
            <consortium name="US DOE Joint Genome Institute"/>
            <person name="Copeland A."/>
            <person name="Lucas S."/>
            <person name="Lapidus A."/>
            <person name="Glavina del Rio T."/>
            <person name="Dalin E."/>
            <person name="Tice H."/>
            <person name="Bruce D."/>
            <person name="Goodwin L."/>
            <person name="Pitluck S."/>
            <person name="Kiss H."/>
            <person name="Chertkov O."/>
            <person name="Monk C."/>
            <person name="Brettin T."/>
            <person name="Detter J.C."/>
            <person name="Han C."/>
            <person name="Kuske C.R."/>
            <person name="Schmutz J."/>
            <person name="Larimer F."/>
            <person name="Land M."/>
            <person name="Hauser L."/>
            <person name="Kyrpides N."/>
            <person name="Mikhailova N."/>
            <person name="Vishnivetskaya T."/>
            <person name="Rodrigues D.F."/>
            <person name="Gilichinsky D."/>
            <person name="Tiedje J."/>
            <person name="Richardson P."/>
        </authorList>
    </citation>
    <scope>NUCLEOTIDE SEQUENCE [LARGE SCALE GENOMIC DNA]</scope>
    <source>
        <strain>DSM 17290 / CCUG 55495 / CIP 109462 / JCM 13490 / 255-15</strain>
    </source>
</reference>
<proteinExistence type="inferred from homology"/>
<name>DNAK_EXIS2</name>
<feature type="chain" id="PRO_1000119705" description="Chaperone protein DnaK">
    <location>
        <begin position="1"/>
        <end position="608"/>
    </location>
</feature>
<feature type="region of interest" description="Disordered" evidence="2">
    <location>
        <begin position="575"/>
        <end position="608"/>
    </location>
</feature>
<feature type="compositionally biased region" description="Low complexity" evidence="2">
    <location>
        <begin position="576"/>
        <end position="590"/>
    </location>
</feature>
<feature type="compositionally biased region" description="Acidic residues" evidence="2">
    <location>
        <begin position="593"/>
        <end position="608"/>
    </location>
</feature>
<feature type="modified residue" description="Phosphothreonine; by autocatalysis" evidence="1">
    <location>
        <position position="172"/>
    </location>
</feature>
<gene>
    <name evidence="1" type="primary">dnaK</name>
    <name type="ordered locus">Exig_0781</name>
</gene>
<keyword id="KW-0067">ATP-binding</keyword>
<keyword id="KW-0143">Chaperone</keyword>
<keyword id="KW-0547">Nucleotide-binding</keyword>
<keyword id="KW-0597">Phosphoprotein</keyword>
<keyword id="KW-1185">Reference proteome</keyword>
<keyword id="KW-0346">Stress response</keyword>
<dbReference type="EMBL" id="CP001022">
    <property type="protein sequence ID" value="ACB60262.1"/>
    <property type="molecule type" value="Genomic_DNA"/>
</dbReference>
<dbReference type="RefSeq" id="WP_012369686.1">
    <property type="nucleotide sequence ID" value="NC_010556.1"/>
</dbReference>
<dbReference type="SMR" id="B1YKS9"/>
<dbReference type="STRING" id="262543.Exig_0781"/>
<dbReference type="KEGG" id="esi:Exig_0781"/>
<dbReference type="eggNOG" id="COG0443">
    <property type="taxonomic scope" value="Bacteria"/>
</dbReference>
<dbReference type="HOGENOM" id="CLU_005965_2_4_9"/>
<dbReference type="OrthoDB" id="9766019at2"/>
<dbReference type="Proteomes" id="UP000001681">
    <property type="component" value="Chromosome"/>
</dbReference>
<dbReference type="GO" id="GO:0005524">
    <property type="term" value="F:ATP binding"/>
    <property type="evidence" value="ECO:0007669"/>
    <property type="project" value="UniProtKB-UniRule"/>
</dbReference>
<dbReference type="GO" id="GO:0140662">
    <property type="term" value="F:ATP-dependent protein folding chaperone"/>
    <property type="evidence" value="ECO:0007669"/>
    <property type="project" value="InterPro"/>
</dbReference>
<dbReference type="GO" id="GO:0051082">
    <property type="term" value="F:unfolded protein binding"/>
    <property type="evidence" value="ECO:0007669"/>
    <property type="project" value="InterPro"/>
</dbReference>
<dbReference type="CDD" id="cd10234">
    <property type="entry name" value="ASKHA_NBD_HSP70_DnaK-like"/>
    <property type="match status" value="1"/>
</dbReference>
<dbReference type="FunFam" id="2.60.34.10:FF:000014">
    <property type="entry name" value="Chaperone protein DnaK HSP70"/>
    <property type="match status" value="1"/>
</dbReference>
<dbReference type="FunFam" id="1.20.1270.10:FF:000001">
    <property type="entry name" value="Molecular chaperone DnaK"/>
    <property type="match status" value="1"/>
</dbReference>
<dbReference type="FunFam" id="3.30.420.40:FF:000071">
    <property type="entry name" value="Molecular chaperone DnaK"/>
    <property type="match status" value="1"/>
</dbReference>
<dbReference type="FunFam" id="3.90.640.10:FF:000003">
    <property type="entry name" value="Molecular chaperone DnaK"/>
    <property type="match status" value="1"/>
</dbReference>
<dbReference type="Gene3D" id="1.20.1270.10">
    <property type="match status" value="1"/>
</dbReference>
<dbReference type="Gene3D" id="3.30.420.40">
    <property type="match status" value="2"/>
</dbReference>
<dbReference type="Gene3D" id="3.90.640.10">
    <property type="entry name" value="Actin, Chain A, domain 4"/>
    <property type="match status" value="1"/>
</dbReference>
<dbReference type="Gene3D" id="2.60.34.10">
    <property type="entry name" value="Substrate Binding Domain Of DNAk, Chain A, domain 1"/>
    <property type="match status" value="1"/>
</dbReference>
<dbReference type="HAMAP" id="MF_00332">
    <property type="entry name" value="DnaK"/>
    <property type="match status" value="1"/>
</dbReference>
<dbReference type="InterPro" id="IPR043129">
    <property type="entry name" value="ATPase_NBD"/>
</dbReference>
<dbReference type="InterPro" id="IPR012725">
    <property type="entry name" value="Chaperone_DnaK"/>
</dbReference>
<dbReference type="InterPro" id="IPR018181">
    <property type="entry name" value="Heat_shock_70_CS"/>
</dbReference>
<dbReference type="InterPro" id="IPR029048">
    <property type="entry name" value="HSP70_C_sf"/>
</dbReference>
<dbReference type="InterPro" id="IPR029047">
    <property type="entry name" value="HSP70_peptide-bd_sf"/>
</dbReference>
<dbReference type="InterPro" id="IPR013126">
    <property type="entry name" value="Hsp_70_fam"/>
</dbReference>
<dbReference type="NCBIfam" id="NF001413">
    <property type="entry name" value="PRK00290.1"/>
    <property type="match status" value="1"/>
</dbReference>
<dbReference type="NCBIfam" id="TIGR02350">
    <property type="entry name" value="prok_dnaK"/>
    <property type="match status" value="1"/>
</dbReference>
<dbReference type="PANTHER" id="PTHR19375">
    <property type="entry name" value="HEAT SHOCK PROTEIN 70KDA"/>
    <property type="match status" value="1"/>
</dbReference>
<dbReference type="Pfam" id="PF00012">
    <property type="entry name" value="HSP70"/>
    <property type="match status" value="1"/>
</dbReference>
<dbReference type="PRINTS" id="PR00301">
    <property type="entry name" value="HEATSHOCK70"/>
</dbReference>
<dbReference type="SUPFAM" id="SSF53067">
    <property type="entry name" value="Actin-like ATPase domain"/>
    <property type="match status" value="2"/>
</dbReference>
<dbReference type="SUPFAM" id="SSF100934">
    <property type="entry name" value="Heat shock protein 70kD (HSP70), C-terminal subdomain"/>
    <property type="match status" value="1"/>
</dbReference>
<dbReference type="SUPFAM" id="SSF100920">
    <property type="entry name" value="Heat shock protein 70kD (HSP70), peptide-binding domain"/>
    <property type="match status" value="1"/>
</dbReference>
<dbReference type="PROSITE" id="PS00297">
    <property type="entry name" value="HSP70_1"/>
    <property type="match status" value="1"/>
</dbReference>
<dbReference type="PROSITE" id="PS00329">
    <property type="entry name" value="HSP70_2"/>
    <property type="match status" value="1"/>
</dbReference>
<dbReference type="PROSITE" id="PS01036">
    <property type="entry name" value="HSP70_3"/>
    <property type="match status" value="1"/>
</dbReference>
<evidence type="ECO:0000255" key="1">
    <source>
        <dbReference type="HAMAP-Rule" id="MF_00332"/>
    </source>
</evidence>
<evidence type="ECO:0000256" key="2">
    <source>
        <dbReference type="SAM" id="MobiDB-lite"/>
    </source>
</evidence>
<comment type="function">
    <text evidence="1">Acts as a chaperone.</text>
</comment>
<comment type="induction">
    <text evidence="1">By stress conditions e.g. heat shock.</text>
</comment>
<comment type="similarity">
    <text evidence="1">Belongs to the heat shock protein 70 family.</text>
</comment>
<organism>
    <name type="scientific">Exiguobacterium sibiricum (strain DSM 17290 / CCUG 55495 / CIP 109462 / JCM 13490 / 255-15)</name>
    <dbReference type="NCBI Taxonomy" id="262543"/>
    <lineage>
        <taxon>Bacteria</taxon>
        <taxon>Bacillati</taxon>
        <taxon>Bacillota</taxon>
        <taxon>Bacilli</taxon>
        <taxon>Bacillales</taxon>
        <taxon>Bacillales Family XII. Incertae Sedis</taxon>
        <taxon>Exiguobacterium</taxon>
    </lineage>
</organism>
<accession>B1YKS9</accession>
<sequence length="608" mass="64904">MAKIIGIDLGTTNSCVAVMEGGEPVVIANAEGNRTTPSVVAFKNGERQVGEVAKRQAITNPNTIMSIKRHMGTDYKVEVEGKDYTPQEVSAIILQKLKAQAEDYLGEKVTEAVITVPAYFNDAERQATKDAGTIAGLDVKRIINEPTAAALAYGLEKGEDHTILIYDLGGGTFDVSILELGDGVFEVVSTAGDSRLGGDDFDQKIIDHLVAEFKKDNGIDLAQDKMALQRLKDAAEKAKKDLSGVSSTQISLPFITAGAAGPLHLEMTLSRAKFDDLTADLVERTMAPTRRALSDAGMTPDKIDKIILVGGSTRIPAVQKAVQDFTGKESFKGVNPDEVVALGAAVQGGVLTGDVKDVVLLDVTPLSLGIETMGSVMTKLIDRNTTIPTSKSQVFSTAADNQPAVDIHVLQGERPMASDNKTLGRFQLTDIPPAQRGVPQIEVKFDIDANGIVNVSAKDLGTNKEQSITIQSSSGLTEADIDQMVKDAEANADADNKRKEEVELRNEADQLVFATDKAVKDLGEQIDAADKEKAEAAKEKVTTALAGTDVEAIRSAKDELSTVVQELTQKVYENMAQQQAGAEGAQAGGQDDNVMDAEFEEVDDKDNK</sequence>